<accession>A5D6W6</accession>
<accession>Q8IUQ7</accession>
<sequence length="292" mass="32207">MERGPVVGAGLGAGARIQALLGCLLKVLLWVASALLYFGSEQAARLLGSPCLRRLYHAWLAAVVIFGPLLQFHVNPRTIFASHGNFFNIKFVNSAWGWTCTFLGGFVLLVVFLATRRVAVTARHLSRLVVGAAVWRGAGRAFLLIEDLTGSCFEPLPQGLLLHELPDRRSCLAAGHQWRGYTVSSHTFLLTFCCLLMAEEAAVFAKYLAHGLPAGAPLRLVFLLNVLLLGLWNFLLLCTVIYFHQYTHKVVGAAVGTFAWYLTYGSWYHQPWSPGSPGHGLFPRPHSSRKHN</sequence>
<gene>
    <name evidence="2 7" type="primary">FITM1</name>
    <name evidence="2" type="synonym">FIT1</name>
</gene>
<name>FITM1_HUMAN</name>
<evidence type="ECO:0000255" key="1"/>
<evidence type="ECO:0000255" key="2">
    <source>
        <dbReference type="HAMAP-Rule" id="MF_03229"/>
    </source>
</evidence>
<evidence type="ECO:0000269" key="3">
    <source>
    </source>
</evidence>
<evidence type="ECO:0000303" key="4">
    <source>
    </source>
</evidence>
<evidence type="ECO:0000303" key="5">
    <source>
    </source>
</evidence>
<evidence type="ECO:0000305" key="6"/>
<evidence type="ECO:0000312" key="7">
    <source>
        <dbReference type="HGNC" id="HGNC:33714"/>
    </source>
</evidence>
<reference key="1">
    <citation type="submission" date="2005-09" db="EMBL/GenBank/DDBJ databases">
        <authorList>
            <person name="Mural R.J."/>
            <person name="Istrail S."/>
            <person name="Sutton G.G."/>
            <person name="Florea L."/>
            <person name="Halpern A.L."/>
            <person name="Mobarry C.M."/>
            <person name="Lippert R."/>
            <person name="Walenz B."/>
            <person name="Shatkay H."/>
            <person name="Dew I."/>
            <person name="Miller J.R."/>
            <person name="Flanigan M.J."/>
            <person name="Edwards N.J."/>
            <person name="Bolanos R."/>
            <person name="Fasulo D."/>
            <person name="Halldorsson B.V."/>
            <person name="Hannenhalli S."/>
            <person name="Turner R."/>
            <person name="Yooseph S."/>
            <person name="Lu F."/>
            <person name="Nusskern D.R."/>
            <person name="Shue B.C."/>
            <person name="Zheng X.H."/>
            <person name="Zhong F."/>
            <person name="Delcher A.L."/>
            <person name="Huson D.H."/>
            <person name="Kravitz S.A."/>
            <person name="Mouchard L."/>
            <person name="Reinert K."/>
            <person name="Remington K.A."/>
            <person name="Clark A.G."/>
            <person name="Waterman M.S."/>
            <person name="Eichler E.E."/>
            <person name="Adams M.D."/>
            <person name="Hunkapiller M.W."/>
            <person name="Myers E.W."/>
            <person name="Venter J.C."/>
        </authorList>
    </citation>
    <scope>NUCLEOTIDE SEQUENCE [LARGE SCALE GENOMIC DNA]</scope>
</reference>
<reference key="2">
    <citation type="journal article" date="2004" name="Genome Res.">
        <title>The status, quality, and expansion of the NIH full-length cDNA project: the Mammalian Gene Collection (MGC).</title>
        <authorList>
            <consortium name="The MGC Project Team"/>
        </authorList>
    </citation>
    <scope>NUCLEOTIDE SEQUENCE [LARGE SCALE MRNA] (ISOFORMS 1 AND 2)</scope>
    <source>
        <tissue>Pancreas</tissue>
    </source>
</reference>
<reference key="3">
    <citation type="journal article" date="2008" name="Proc. Natl. Acad. Sci. U.S.A.">
        <title>Evolutionarily conserved gene family important for fat storage.</title>
        <authorList>
            <person name="Kadereit B."/>
            <person name="Kumar P."/>
            <person name="Wang W.-J."/>
            <person name="Miranda D."/>
            <person name="Snapp E.L."/>
            <person name="Severina N."/>
            <person name="Torregroza I."/>
            <person name="Evans T."/>
            <person name="Silver D.L."/>
        </authorList>
    </citation>
    <scope>FUNCTION</scope>
    <scope>SUBCELLULAR LOCATION</scope>
    <scope>TISSUE SPECIFICITY</scope>
</reference>
<feature type="chain" id="PRO_0000319575" description="Fat storage-inducing transmembrane protein 1">
    <location>
        <begin position="1"/>
        <end position="292"/>
    </location>
</feature>
<feature type="topological domain" description="Lumenal" evidence="6">
    <location>
        <begin position="1"/>
        <end position="18"/>
    </location>
</feature>
<feature type="transmembrane region" description="Helical" evidence="1">
    <location>
        <begin position="19"/>
        <end position="39"/>
    </location>
</feature>
<feature type="topological domain" description="Cytoplasmic" evidence="6">
    <location>
        <begin position="40"/>
        <end position="54"/>
    </location>
</feature>
<feature type="transmembrane region" description="Helical" evidence="1">
    <location>
        <begin position="55"/>
        <end position="75"/>
    </location>
</feature>
<feature type="topological domain" description="Lumenal" evidence="6">
    <location>
        <begin position="76"/>
        <end position="94"/>
    </location>
</feature>
<feature type="transmembrane region" description="Helical" evidence="1">
    <location>
        <begin position="95"/>
        <end position="115"/>
    </location>
</feature>
<feature type="topological domain" description="Cytoplasmic" evidence="6">
    <location>
        <begin position="116"/>
        <end position="141"/>
    </location>
</feature>
<feature type="transmembrane region" description="Helical" evidence="1">
    <location>
        <begin position="142"/>
        <end position="162"/>
    </location>
</feature>
<feature type="topological domain" description="Lumenal" evidence="6">
    <location>
        <begin position="163"/>
        <end position="187"/>
    </location>
</feature>
<feature type="transmembrane region" description="Helical" evidence="1">
    <location>
        <begin position="188"/>
        <end position="208"/>
    </location>
</feature>
<feature type="topological domain" description="Cytoplasmic" evidence="6">
    <location>
        <begin position="209"/>
        <end position="220"/>
    </location>
</feature>
<feature type="transmembrane region" description="Helical" evidence="1">
    <location>
        <begin position="221"/>
        <end position="241"/>
    </location>
</feature>
<feature type="topological domain" description="Lumenal" evidence="6">
    <location>
        <begin position="242"/>
        <end position="249"/>
    </location>
</feature>
<feature type="transmembrane region" description="Helical" evidence="1">
    <location>
        <begin position="250"/>
        <end position="270"/>
    </location>
</feature>
<feature type="topological domain" description="Cytoplasmic" evidence="6">
    <location>
        <begin position="271"/>
        <end position="292"/>
    </location>
</feature>
<feature type="active site" evidence="2">
    <location>
        <position position="186"/>
    </location>
</feature>
<feature type="active site" evidence="2">
    <location>
        <position position="244"/>
    </location>
</feature>
<feature type="site" description="Important for catalytic activity" evidence="2">
    <location>
        <position position="248"/>
    </location>
</feature>
<feature type="splice variant" id="VSP_031493" description="In isoform 2." evidence="4">
    <location>
        <begin position="1"/>
        <end position="196"/>
    </location>
</feature>
<organism>
    <name type="scientific">Homo sapiens</name>
    <name type="common">Human</name>
    <dbReference type="NCBI Taxonomy" id="9606"/>
    <lineage>
        <taxon>Eukaryota</taxon>
        <taxon>Metazoa</taxon>
        <taxon>Chordata</taxon>
        <taxon>Craniata</taxon>
        <taxon>Vertebrata</taxon>
        <taxon>Euteleostomi</taxon>
        <taxon>Mammalia</taxon>
        <taxon>Eutheria</taxon>
        <taxon>Euarchontoglires</taxon>
        <taxon>Primates</taxon>
        <taxon>Haplorrhini</taxon>
        <taxon>Catarrhini</taxon>
        <taxon>Hominidae</taxon>
        <taxon>Homo</taxon>
    </lineage>
</organism>
<comment type="function">
    <text evidence="2 3">Plays an important role in the formation of lipid droplets (LDs) which are storage organelles at the center of lipid and energy homeostasis (By similarity) (PubMed:18160536). Directly binds to diacylglycerol (DAGs) and triacylglycerol (By similarity).</text>
</comment>
<comment type="subcellular location">
    <subcellularLocation>
        <location evidence="2 3">Endoplasmic reticulum membrane</location>
        <topology evidence="2">Multi-pass membrane protein</topology>
    </subcellularLocation>
</comment>
<comment type="alternative products">
    <event type="alternative splicing"/>
    <isoform>
        <id>A5D6W6-1</id>
        <name>1</name>
        <sequence type="displayed"/>
    </isoform>
    <isoform>
        <id>A5D6W6-2</id>
        <name>2</name>
        <sequence type="described" ref="VSP_031493"/>
    </isoform>
</comment>
<comment type="tissue specificity">
    <text evidence="3">Primarily expressed in heart and skeletal muscle.</text>
</comment>
<comment type="similarity">
    <text evidence="2">Belongs to the FIT family. FIT1 subfamily.</text>
</comment>
<keyword id="KW-0025">Alternative splicing</keyword>
<keyword id="KW-0256">Endoplasmic reticulum</keyword>
<keyword id="KW-0443">Lipid metabolism</keyword>
<keyword id="KW-0472">Membrane</keyword>
<keyword id="KW-1267">Proteomics identification</keyword>
<keyword id="KW-1185">Reference proteome</keyword>
<keyword id="KW-0812">Transmembrane</keyword>
<keyword id="KW-1133">Transmembrane helix</keyword>
<dbReference type="EMBL" id="CH471078">
    <property type="protein sequence ID" value="EAW66107.1"/>
    <property type="molecule type" value="Genomic_DNA"/>
</dbReference>
<dbReference type="EMBL" id="BC042179">
    <property type="status" value="NOT_ANNOTATED_CDS"/>
    <property type="molecule type" value="mRNA"/>
</dbReference>
<dbReference type="EMBL" id="BC139911">
    <property type="protein sequence ID" value="AAI39912.1"/>
    <property type="molecule type" value="mRNA"/>
</dbReference>
<dbReference type="CCDS" id="CCDS9611.1">
    <molecule id="A5D6W6-1"/>
</dbReference>
<dbReference type="RefSeq" id="NP_981947.1">
    <molecule id="A5D6W6-1"/>
    <property type="nucleotide sequence ID" value="NM_203402.3"/>
</dbReference>
<dbReference type="BioGRID" id="127777">
    <property type="interactions" value="1"/>
</dbReference>
<dbReference type="FunCoup" id="A5D6W6">
    <property type="interactions" value="101"/>
</dbReference>
<dbReference type="STRING" id="9606.ENSP00000267426"/>
<dbReference type="GlyGen" id="A5D6W6">
    <property type="glycosylation" value="1 site"/>
</dbReference>
<dbReference type="iPTMnet" id="A5D6W6"/>
<dbReference type="PhosphoSitePlus" id="A5D6W6"/>
<dbReference type="BioMuta" id="FITM1"/>
<dbReference type="jPOST" id="A5D6W6"/>
<dbReference type="MassIVE" id="A5D6W6"/>
<dbReference type="PaxDb" id="9606-ENSP00000267426"/>
<dbReference type="PeptideAtlas" id="A5D6W6"/>
<dbReference type="ProteomicsDB" id="707">
    <molecule id="A5D6W6-1"/>
</dbReference>
<dbReference type="Antibodypedia" id="8923">
    <property type="antibodies" value="35 antibodies from 14 providers"/>
</dbReference>
<dbReference type="DNASU" id="161247"/>
<dbReference type="Ensembl" id="ENST00000267426.6">
    <molecule id="A5D6W6-1"/>
    <property type="protein sequence ID" value="ENSP00000267426.5"/>
    <property type="gene ID" value="ENSG00000139914.7"/>
</dbReference>
<dbReference type="Ensembl" id="ENST00000559294.1">
    <molecule id="A5D6W6-2"/>
    <property type="protein sequence ID" value="ENSP00000453741.1"/>
    <property type="gene ID" value="ENSG00000139914.7"/>
</dbReference>
<dbReference type="Ensembl" id="ENST00000642380.1">
    <molecule id="A5D6W6-2"/>
    <property type="protein sequence ID" value="ENSP00000493481.1"/>
    <property type="gene ID" value="ENSG00000285321.1"/>
</dbReference>
<dbReference type="Ensembl" id="ENST00000644407.1">
    <molecule id="A5D6W6-1"/>
    <property type="protein sequence ID" value="ENSP00000493961.1"/>
    <property type="gene ID" value="ENSG00000285321.1"/>
</dbReference>
<dbReference type="GeneID" id="161247"/>
<dbReference type="KEGG" id="hsa:161247"/>
<dbReference type="MANE-Select" id="ENST00000267426.6">
    <property type="protein sequence ID" value="ENSP00000267426.5"/>
    <property type="RefSeq nucleotide sequence ID" value="NM_203402.3"/>
    <property type="RefSeq protein sequence ID" value="NP_981947.1"/>
</dbReference>
<dbReference type="UCSC" id="uc001wmf.3">
    <molecule id="A5D6W6-1"/>
    <property type="organism name" value="human"/>
</dbReference>
<dbReference type="AGR" id="HGNC:33714"/>
<dbReference type="CTD" id="161247"/>
<dbReference type="DisGeNET" id="161247"/>
<dbReference type="GeneCards" id="FITM1"/>
<dbReference type="HGNC" id="HGNC:33714">
    <property type="gene designation" value="FITM1"/>
</dbReference>
<dbReference type="HPA" id="ENSG00000139914">
    <property type="expression patterns" value="Group enriched (heart muscle, skeletal muscle)"/>
</dbReference>
<dbReference type="MIM" id="612028">
    <property type="type" value="gene"/>
</dbReference>
<dbReference type="neXtProt" id="NX_A5D6W6"/>
<dbReference type="OpenTargets" id="ENSG00000139914"/>
<dbReference type="PharmGKB" id="PA165478932"/>
<dbReference type="VEuPathDB" id="HostDB:ENSG00000139914"/>
<dbReference type="eggNOG" id="KOG3750">
    <property type="taxonomic scope" value="Eukaryota"/>
</dbReference>
<dbReference type="GeneTree" id="ENSGT00530000063693"/>
<dbReference type="HOGENOM" id="CLU_049499_2_0_1"/>
<dbReference type="InParanoid" id="A5D6W6"/>
<dbReference type="OMA" id="AIFANHH"/>
<dbReference type="OrthoDB" id="5579088at2759"/>
<dbReference type="PAN-GO" id="A5D6W6">
    <property type="GO annotations" value="4 GO annotations based on evolutionary models"/>
</dbReference>
<dbReference type="PhylomeDB" id="A5D6W6"/>
<dbReference type="PathwayCommons" id="A5D6W6"/>
<dbReference type="Reactome" id="R-HSA-8964572">
    <property type="pathway name" value="Lipid particle organization"/>
</dbReference>
<dbReference type="BioGRID-ORCS" id="161247">
    <property type="hits" value="16 hits in 1144 CRISPR screens"/>
</dbReference>
<dbReference type="ChiTaRS" id="FITM1">
    <property type="organism name" value="human"/>
</dbReference>
<dbReference type="GenomeRNAi" id="161247"/>
<dbReference type="Pharos" id="A5D6W6">
    <property type="development level" value="Tdark"/>
</dbReference>
<dbReference type="PRO" id="PR:A5D6W6"/>
<dbReference type="Proteomes" id="UP000005640">
    <property type="component" value="Chromosome 14"/>
</dbReference>
<dbReference type="RNAct" id="A5D6W6">
    <property type="molecule type" value="protein"/>
</dbReference>
<dbReference type="Bgee" id="ENSG00000139914">
    <property type="expression patterns" value="Expressed in hindlimb stylopod muscle and 92 other cell types or tissues"/>
</dbReference>
<dbReference type="GO" id="GO:0005789">
    <property type="term" value="C:endoplasmic reticulum membrane"/>
    <property type="evidence" value="ECO:0000250"/>
    <property type="project" value="BHF-UCL"/>
</dbReference>
<dbReference type="GO" id="GO:0010945">
    <property type="term" value="F:coenzyme A diphosphatase activity"/>
    <property type="evidence" value="ECO:0007669"/>
    <property type="project" value="InterPro"/>
</dbReference>
<dbReference type="GO" id="GO:0019992">
    <property type="term" value="F:diacylglycerol binding"/>
    <property type="evidence" value="ECO:0000250"/>
    <property type="project" value="UniProtKB"/>
</dbReference>
<dbReference type="GO" id="GO:0017129">
    <property type="term" value="F:triglyceride binding"/>
    <property type="evidence" value="ECO:0000250"/>
    <property type="project" value="UniProtKB"/>
</dbReference>
<dbReference type="GO" id="GO:0045444">
    <property type="term" value="P:fat cell differentiation"/>
    <property type="evidence" value="ECO:0000250"/>
    <property type="project" value="BHF-UCL"/>
</dbReference>
<dbReference type="GO" id="GO:0140042">
    <property type="term" value="P:lipid droplet formation"/>
    <property type="evidence" value="ECO:0000250"/>
    <property type="project" value="UniProtKB"/>
</dbReference>
<dbReference type="GO" id="GO:0034389">
    <property type="term" value="P:lipid droplet organization"/>
    <property type="evidence" value="ECO:0000250"/>
    <property type="project" value="BHF-UCL"/>
</dbReference>
<dbReference type="GO" id="GO:0019915">
    <property type="term" value="P:lipid storage"/>
    <property type="evidence" value="ECO:0000318"/>
    <property type="project" value="GO_Central"/>
</dbReference>
<dbReference type="GO" id="GO:0008654">
    <property type="term" value="P:phospholipid biosynthetic process"/>
    <property type="evidence" value="ECO:0000318"/>
    <property type="project" value="GO_Central"/>
</dbReference>
<dbReference type="HAMAP" id="MF_03229">
    <property type="entry name" value="FITM1"/>
    <property type="match status" value="1"/>
</dbReference>
<dbReference type="HAMAP" id="MF_03230">
    <property type="entry name" value="FITM2"/>
    <property type="match status" value="1"/>
</dbReference>
<dbReference type="InterPro" id="IPR019388">
    <property type="entry name" value="FIT"/>
</dbReference>
<dbReference type="InterPro" id="IPR046402">
    <property type="entry name" value="FIT1"/>
</dbReference>
<dbReference type="InterPro" id="IPR046401">
    <property type="entry name" value="FITM1/2"/>
</dbReference>
<dbReference type="PANTHER" id="PTHR23129">
    <property type="entry name" value="ACYL-COENZYME A DIPHOSPHATASE FITM2"/>
    <property type="match status" value="1"/>
</dbReference>
<dbReference type="PANTHER" id="PTHR23129:SF3">
    <property type="entry name" value="FAT STORAGE-INDUCING TRANSMEMBRANE PROTEIN 1"/>
    <property type="match status" value="1"/>
</dbReference>
<protein>
    <recommendedName>
        <fullName evidence="2 5">Fat storage-inducing transmembrane protein 1</fullName>
    </recommendedName>
    <alternativeName>
        <fullName evidence="2">Fat-inducing protein 1</fullName>
    </alternativeName>
</protein>
<proteinExistence type="evidence at protein level"/>